<accession>P40592</accession>
<comment type="similarity">
    <text evidence="1">Belongs to the HupF/HypC family.</text>
</comment>
<name>HOXL_AZOVI</name>
<organism>
    <name type="scientific">Azotobacter vinelandii</name>
    <dbReference type="NCBI Taxonomy" id="354"/>
    <lineage>
        <taxon>Bacteria</taxon>
        <taxon>Pseudomonadati</taxon>
        <taxon>Pseudomonadota</taxon>
        <taxon>Gammaproteobacteria</taxon>
        <taxon>Pseudomonadales</taxon>
        <taxon>Pseudomonadaceae</taxon>
        <taxon>Azotobacter</taxon>
    </lineage>
</organism>
<reference key="1">
    <citation type="journal article" date="1992" name="J. Bacteriol.">
        <title>Nucleotide sequences and genetic analysis of hydrogen oxidation (hox) genes in Azotobacter vinelandii.</title>
        <authorList>
            <person name="Menon A."/>
            <person name="Mortenson L.E."/>
            <person name="Robson R.L."/>
        </authorList>
    </citation>
    <scope>NUCLEOTIDE SEQUENCE [GENOMIC DNA]</scope>
    <source>
        <strain>ATCC 13705 / OP1 / DSM 366 / NCIMB 11614 / LMG 3878 / UW</strain>
    </source>
</reference>
<proteinExistence type="inferred from homology"/>
<dbReference type="EMBL" id="M80522">
    <property type="protein sequence ID" value="AAA22127.1"/>
    <property type="molecule type" value="Genomic_DNA"/>
</dbReference>
<dbReference type="EMBL" id="L23970">
    <property type="protein sequence ID" value="AAA19502.1"/>
    <property type="molecule type" value="Unassigned_DNA"/>
</dbReference>
<dbReference type="PIR" id="B44915">
    <property type="entry name" value="B44915"/>
</dbReference>
<dbReference type="SMR" id="P40592"/>
<dbReference type="OMA" id="MCVGDPL"/>
<dbReference type="GO" id="GO:1902670">
    <property type="term" value="F:carbon dioxide binding"/>
    <property type="evidence" value="ECO:0007669"/>
    <property type="project" value="TreeGrafter"/>
</dbReference>
<dbReference type="GO" id="GO:0005506">
    <property type="term" value="F:iron ion binding"/>
    <property type="evidence" value="ECO:0007669"/>
    <property type="project" value="TreeGrafter"/>
</dbReference>
<dbReference type="GO" id="GO:0051604">
    <property type="term" value="P:protein maturation"/>
    <property type="evidence" value="ECO:0007669"/>
    <property type="project" value="TreeGrafter"/>
</dbReference>
<dbReference type="Gene3D" id="2.30.30.140">
    <property type="match status" value="1"/>
</dbReference>
<dbReference type="InterPro" id="IPR019812">
    <property type="entry name" value="Hydgase_assmbl_chp_CS"/>
</dbReference>
<dbReference type="InterPro" id="IPR001109">
    <property type="entry name" value="Hydrogenase_HupF/HypC"/>
</dbReference>
<dbReference type="NCBIfam" id="TIGR00074">
    <property type="entry name" value="hypC_hupF"/>
    <property type="match status" value="1"/>
</dbReference>
<dbReference type="PANTHER" id="PTHR35177">
    <property type="entry name" value="HYDROGENASE MATURATION FACTOR HYBG"/>
    <property type="match status" value="1"/>
</dbReference>
<dbReference type="PANTHER" id="PTHR35177:SF1">
    <property type="entry name" value="HYDROGENASE MATURATION FACTOR HYPC"/>
    <property type="match status" value="1"/>
</dbReference>
<dbReference type="Pfam" id="PF01455">
    <property type="entry name" value="HupF_HypC"/>
    <property type="match status" value="1"/>
</dbReference>
<dbReference type="PRINTS" id="PR00445">
    <property type="entry name" value="HUPFHYPC"/>
</dbReference>
<dbReference type="SUPFAM" id="SSF159127">
    <property type="entry name" value="HupF/HypC-like"/>
    <property type="match status" value="1"/>
</dbReference>
<dbReference type="PROSITE" id="PS01097">
    <property type="entry name" value="HUPF_HYPC"/>
    <property type="match status" value="1"/>
</dbReference>
<protein>
    <recommendedName>
        <fullName>Hydrogenase expression/formation protein HoxL</fullName>
    </recommendedName>
</protein>
<sequence>MCIGIPLRVLECAPGRALCGDENGVRWIDTRLVEPPAPGDWLLVFLDAAREILDAGRAARIREALRALQAVQAGDPAALAGLFADLDREPQLPPHLQAQLPPKEPT</sequence>
<feature type="chain" id="PRO_0000201389" description="Hydrogenase expression/formation protein HoxL">
    <location>
        <begin position="1"/>
        <end position="106"/>
    </location>
</feature>
<evidence type="ECO:0000305" key="1"/>
<gene>
    <name type="primary">hoxL</name>
</gene>